<accession>Q5LY60</accession>
<keyword id="KW-0963">Cytoplasm</keyword>
<keyword id="KW-0251">Elongation factor</keyword>
<keyword id="KW-0648">Protein biosynthesis</keyword>
<protein>
    <recommendedName>
        <fullName evidence="1">Elongation factor P</fullName>
        <shortName evidence="1">EF-P</shortName>
    </recommendedName>
</protein>
<name>EFP_STRT1</name>
<organism>
    <name type="scientific">Streptococcus thermophilus (strain CNRZ 1066)</name>
    <dbReference type="NCBI Taxonomy" id="299768"/>
    <lineage>
        <taxon>Bacteria</taxon>
        <taxon>Bacillati</taxon>
        <taxon>Bacillota</taxon>
        <taxon>Bacilli</taxon>
        <taxon>Lactobacillales</taxon>
        <taxon>Streptococcaceae</taxon>
        <taxon>Streptococcus</taxon>
    </lineage>
</organism>
<reference key="1">
    <citation type="journal article" date="2004" name="Nat. Biotechnol.">
        <title>Complete sequence and comparative genome analysis of the dairy bacterium Streptococcus thermophilus.</title>
        <authorList>
            <person name="Bolotin A."/>
            <person name="Quinquis B."/>
            <person name="Renault P."/>
            <person name="Sorokin A."/>
            <person name="Ehrlich S.D."/>
            <person name="Kulakauskas S."/>
            <person name="Lapidus A."/>
            <person name="Goltsman E."/>
            <person name="Mazur M."/>
            <person name="Pusch G.D."/>
            <person name="Fonstein M."/>
            <person name="Overbeek R."/>
            <person name="Kyprides N."/>
            <person name="Purnelle B."/>
            <person name="Prozzi D."/>
            <person name="Ngui K."/>
            <person name="Masuy D."/>
            <person name="Hancy F."/>
            <person name="Burteau S."/>
            <person name="Boutry M."/>
            <person name="Delcour J."/>
            <person name="Goffeau A."/>
            <person name="Hols P."/>
        </authorList>
    </citation>
    <scope>NUCLEOTIDE SEQUENCE [LARGE SCALE GENOMIC DNA]</scope>
    <source>
        <strain>CNRZ 1066</strain>
    </source>
</reference>
<feature type="chain" id="PRO_0000094347" description="Elongation factor P">
    <location>
        <begin position="1"/>
        <end position="186"/>
    </location>
</feature>
<dbReference type="EMBL" id="CP000024">
    <property type="protein sequence ID" value="AAV63258.1"/>
    <property type="molecule type" value="Genomic_DNA"/>
</dbReference>
<dbReference type="RefSeq" id="WP_011227545.1">
    <property type="nucleotide sequence ID" value="NC_006449.1"/>
</dbReference>
<dbReference type="SMR" id="Q5LY60"/>
<dbReference type="KEGG" id="stc:str1740"/>
<dbReference type="HOGENOM" id="CLU_074944_3_0_9"/>
<dbReference type="UniPathway" id="UPA00345"/>
<dbReference type="GO" id="GO:0005737">
    <property type="term" value="C:cytoplasm"/>
    <property type="evidence" value="ECO:0007669"/>
    <property type="project" value="UniProtKB-SubCell"/>
</dbReference>
<dbReference type="GO" id="GO:0003746">
    <property type="term" value="F:translation elongation factor activity"/>
    <property type="evidence" value="ECO:0007669"/>
    <property type="project" value="UniProtKB-UniRule"/>
</dbReference>
<dbReference type="GO" id="GO:0043043">
    <property type="term" value="P:peptide biosynthetic process"/>
    <property type="evidence" value="ECO:0007669"/>
    <property type="project" value="InterPro"/>
</dbReference>
<dbReference type="CDD" id="cd04470">
    <property type="entry name" value="S1_EF-P_repeat_1"/>
    <property type="match status" value="1"/>
</dbReference>
<dbReference type="CDD" id="cd05794">
    <property type="entry name" value="S1_EF-P_repeat_2"/>
    <property type="match status" value="1"/>
</dbReference>
<dbReference type="FunFam" id="2.30.30.30:FF:000003">
    <property type="entry name" value="Elongation factor P"/>
    <property type="match status" value="1"/>
</dbReference>
<dbReference type="FunFam" id="2.40.50.140:FF:000004">
    <property type="entry name" value="Elongation factor P"/>
    <property type="match status" value="1"/>
</dbReference>
<dbReference type="FunFam" id="2.40.50.140:FF:000009">
    <property type="entry name" value="Elongation factor P"/>
    <property type="match status" value="1"/>
</dbReference>
<dbReference type="Gene3D" id="2.30.30.30">
    <property type="match status" value="1"/>
</dbReference>
<dbReference type="Gene3D" id="2.40.50.140">
    <property type="entry name" value="Nucleic acid-binding proteins"/>
    <property type="match status" value="2"/>
</dbReference>
<dbReference type="HAMAP" id="MF_00141">
    <property type="entry name" value="EF_P"/>
    <property type="match status" value="1"/>
</dbReference>
<dbReference type="InterPro" id="IPR015365">
    <property type="entry name" value="Elong-fact-P_C"/>
</dbReference>
<dbReference type="InterPro" id="IPR012340">
    <property type="entry name" value="NA-bd_OB-fold"/>
</dbReference>
<dbReference type="InterPro" id="IPR014722">
    <property type="entry name" value="Rib_uL2_dom2"/>
</dbReference>
<dbReference type="InterPro" id="IPR020599">
    <property type="entry name" value="Transl_elong_fac_P/YeiP"/>
</dbReference>
<dbReference type="InterPro" id="IPR013185">
    <property type="entry name" value="Transl_elong_KOW-like"/>
</dbReference>
<dbReference type="InterPro" id="IPR001059">
    <property type="entry name" value="Transl_elong_P/YeiP_cen"/>
</dbReference>
<dbReference type="InterPro" id="IPR013852">
    <property type="entry name" value="Transl_elong_P/YeiP_CS"/>
</dbReference>
<dbReference type="InterPro" id="IPR011768">
    <property type="entry name" value="Transl_elongation_fac_P"/>
</dbReference>
<dbReference type="InterPro" id="IPR008991">
    <property type="entry name" value="Translation_prot_SH3-like_sf"/>
</dbReference>
<dbReference type="NCBIfam" id="TIGR00038">
    <property type="entry name" value="efp"/>
    <property type="match status" value="1"/>
</dbReference>
<dbReference type="NCBIfam" id="NF001810">
    <property type="entry name" value="PRK00529.1"/>
    <property type="match status" value="1"/>
</dbReference>
<dbReference type="PANTHER" id="PTHR30053">
    <property type="entry name" value="ELONGATION FACTOR P"/>
    <property type="match status" value="1"/>
</dbReference>
<dbReference type="PANTHER" id="PTHR30053:SF12">
    <property type="entry name" value="ELONGATION FACTOR P (EF-P) FAMILY PROTEIN"/>
    <property type="match status" value="1"/>
</dbReference>
<dbReference type="Pfam" id="PF01132">
    <property type="entry name" value="EFP"/>
    <property type="match status" value="1"/>
</dbReference>
<dbReference type="Pfam" id="PF08207">
    <property type="entry name" value="EFP_N"/>
    <property type="match status" value="1"/>
</dbReference>
<dbReference type="Pfam" id="PF09285">
    <property type="entry name" value="Elong-fact-P_C"/>
    <property type="match status" value="1"/>
</dbReference>
<dbReference type="PIRSF" id="PIRSF005901">
    <property type="entry name" value="EF-P"/>
    <property type="match status" value="1"/>
</dbReference>
<dbReference type="SMART" id="SM01185">
    <property type="entry name" value="EFP"/>
    <property type="match status" value="1"/>
</dbReference>
<dbReference type="SMART" id="SM00841">
    <property type="entry name" value="Elong-fact-P_C"/>
    <property type="match status" value="1"/>
</dbReference>
<dbReference type="SUPFAM" id="SSF50249">
    <property type="entry name" value="Nucleic acid-binding proteins"/>
    <property type="match status" value="2"/>
</dbReference>
<dbReference type="SUPFAM" id="SSF50104">
    <property type="entry name" value="Translation proteins SH3-like domain"/>
    <property type="match status" value="1"/>
</dbReference>
<dbReference type="PROSITE" id="PS01275">
    <property type="entry name" value="EFP"/>
    <property type="match status" value="1"/>
</dbReference>
<proteinExistence type="inferred from homology"/>
<comment type="function">
    <text evidence="1">Involved in peptide bond synthesis. Stimulates efficient translation and peptide-bond synthesis on native or reconstituted 70S ribosomes in vitro. Probably functions indirectly by altering the affinity of the ribosome for aminoacyl-tRNA, thus increasing their reactivity as acceptors for peptidyl transferase.</text>
</comment>
<comment type="pathway">
    <text evidence="1">Protein biosynthesis; polypeptide chain elongation.</text>
</comment>
<comment type="subcellular location">
    <subcellularLocation>
        <location evidence="1">Cytoplasm</location>
    </subcellularLocation>
</comment>
<comment type="similarity">
    <text evidence="1">Belongs to the elongation factor P family.</text>
</comment>
<sequence>MIEASKLRAGMTFVTNDGKLLKVLEASHHKPGKGNTIMRMKLRDVRSGSTFDTSYRPEEKFEQAIIETVPAQYLYQMDDTAYFMNTETYDQYEIPVVNVQEELKFILENSDVKIQFYGTEVIGVQVPTTVELTVTETQPSIKGATVTGSGKPATLETGLVVNVPDFIEAGQKLVINTVEGTYVSRA</sequence>
<gene>
    <name evidence="1" type="primary">efp</name>
    <name type="ordered locus">str1740</name>
</gene>
<evidence type="ECO:0000255" key="1">
    <source>
        <dbReference type="HAMAP-Rule" id="MF_00141"/>
    </source>
</evidence>